<comment type="function">
    <text evidence="1">Mitochondrial amino-acid transporter that mediates transport of serine into mitochondria.</text>
</comment>
<comment type="subcellular location">
    <subcellularLocation>
        <location evidence="1">Mitochondrion membrane</location>
        <topology evidence="2">Multi-pass membrane protein</topology>
    </subcellularLocation>
</comment>
<comment type="similarity">
    <text evidence="3">Belongs to the sideroflexin family.</text>
</comment>
<protein>
    <recommendedName>
        <fullName>Sideroflexin</fullName>
    </recommendedName>
</protein>
<keyword id="KW-0029">Amino-acid transport</keyword>
<keyword id="KW-0472">Membrane</keyword>
<keyword id="KW-0496">Mitochondrion</keyword>
<keyword id="KW-1185">Reference proteome</keyword>
<keyword id="KW-0812">Transmembrane</keyword>
<keyword id="KW-1133">Transmembrane helix</keyword>
<keyword id="KW-0813">Transport</keyword>
<gene>
    <name evidence="4" type="primary">sfxn</name>
    <name type="ORF">DDB_G0285029</name>
</gene>
<evidence type="ECO:0000250" key="1">
    <source>
        <dbReference type="UniProtKB" id="Q96NB2"/>
    </source>
</evidence>
<evidence type="ECO:0000255" key="2"/>
<evidence type="ECO:0000305" key="3"/>
<evidence type="ECO:0000312" key="4">
    <source>
        <dbReference type="dictyBase" id="DDB_G0285029"/>
    </source>
</evidence>
<organism>
    <name type="scientific">Dictyostelium discoideum</name>
    <name type="common">Social amoeba</name>
    <dbReference type="NCBI Taxonomy" id="44689"/>
    <lineage>
        <taxon>Eukaryota</taxon>
        <taxon>Amoebozoa</taxon>
        <taxon>Evosea</taxon>
        <taxon>Eumycetozoa</taxon>
        <taxon>Dictyostelia</taxon>
        <taxon>Dictyosteliales</taxon>
        <taxon>Dictyosteliaceae</taxon>
        <taxon>Dictyostelium</taxon>
    </lineage>
</organism>
<sequence>MTSNSFPVFDGVSNKYDNNTFYGRYQNFRDITDPSTLFATEKDLSQSKTLLDNFKKGLVDPVKHSDELWKAKKILDSTIHPDTGKPIFLPFRVSAFLPINVIICAGLILPNASIGTTIFWQWINQSYNIALNHANRNASNTMSNKQILEAYASAVGISCSLAVGLGWGVNKLNIQNKTISSALRMMVPFTAVTSAGIANVLIMRGNEMVNGIDIKDKDGVIHGKSKEAGKSAVYKVAFSRAATSFPALLLPPIVMGLFERTSFVKKYPKVRMPLNLAVIAAIFNTSLPAAIALFPQESTISADSLEPQFRNIKDKNGNIIKEFIYNKGL</sequence>
<proteinExistence type="inferred from homology"/>
<feature type="chain" id="PRO_0000350610" description="Sideroflexin">
    <location>
        <begin position="1"/>
        <end position="329"/>
    </location>
</feature>
<feature type="transmembrane region" description="Helical" evidence="2">
    <location>
        <begin position="95"/>
        <end position="115"/>
    </location>
</feature>
<feature type="transmembrane region" description="Helical" evidence="2">
    <location>
        <begin position="147"/>
        <end position="167"/>
    </location>
</feature>
<feature type="transmembrane region" description="Helical" evidence="2">
    <location>
        <begin position="183"/>
        <end position="203"/>
    </location>
</feature>
<feature type="transmembrane region" description="Helical" evidence="2">
    <location>
        <begin position="238"/>
        <end position="258"/>
    </location>
</feature>
<feature type="transmembrane region" description="Helical" evidence="2">
    <location>
        <begin position="274"/>
        <end position="294"/>
    </location>
</feature>
<dbReference type="EMBL" id="AAFI02000073">
    <property type="protein sequence ID" value="EAL64978.1"/>
    <property type="molecule type" value="Genomic_DNA"/>
</dbReference>
<dbReference type="RefSeq" id="XP_640008.1">
    <property type="nucleotide sequence ID" value="XM_634916.1"/>
</dbReference>
<dbReference type="FunCoup" id="Q54NQ9">
    <property type="interactions" value="58"/>
</dbReference>
<dbReference type="STRING" id="44689.Q54NQ9"/>
<dbReference type="PaxDb" id="44689-DDB0237548"/>
<dbReference type="EnsemblProtists" id="EAL64978">
    <property type="protein sequence ID" value="EAL64978"/>
    <property type="gene ID" value="DDB_G0285029"/>
</dbReference>
<dbReference type="GeneID" id="8624926"/>
<dbReference type="KEGG" id="ddi:DDB_G0285029"/>
<dbReference type="dictyBase" id="DDB_G0285029">
    <property type="gene designation" value="sfxn"/>
</dbReference>
<dbReference type="VEuPathDB" id="AmoebaDB:DDB_G0285029"/>
<dbReference type="eggNOG" id="KOG3767">
    <property type="taxonomic scope" value="Eukaryota"/>
</dbReference>
<dbReference type="HOGENOM" id="CLU_039425_0_0_1"/>
<dbReference type="InParanoid" id="Q54NQ9"/>
<dbReference type="OMA" id="GTTIFWQ"/>
<dbReference type="PhylomeDB" id="Q54NQ9"/>
<dbReference type="PRO" id="PR:Q54NQ9"/>
<dbReference type="Proteomes" id="UP000002195">
    <property type="component" value="Chromosome 4"/>
</dbReference>
<dbReference type="GO" id="GO:0005743">
    <property type="term" value="C:mitochondrial inner membrane"/>
    <property type="evidence" value="ECO:0000318"/>
    <property type="project" value="GO_Central"/>
</dbReference>
<dbReference type="GO" id="GO:0015075">
    <property type="term" value="F:monoatomic ion transmembrane transporter activity"/>
    <property type="evidence" value="ECO:0007669"/>
    <property type="project" value="InterPro"/>
</dbReference>
<dbReference type="GO" id="GO:0022857">
    <property type="term" value="F:transmembrane transporter activity"/>
    <property type="evidence" value="ECO:0000318"/>
    <property type="project" value="GO_Central"/>
</dbReference>
<dbReference type="GO" id="GO:0006865">
    <property type="term" value="P:amino acid transport"/>
    <property type="evidence" value="ECO:0007669"/>
    <property type="project" value="UniProtKB-KW"/>
</dbReference>
<dbReference type="GO" id="GO:1990542">
    <property type="term" value="P:mitochondrial transmembrane transport"/>
    <property type="evidence" value="ECO:0000318"/>
    <property type="project" value="GO_Central"/>
</dbReference>
<dbReference type="InterPro" id="IPR004686">
    <property type="entry name" value="Mtc"/>
</dbReference>
<dbReference type="NCBIfam" id="TIGR00798">
    <property type="entry name" value="mtc"/>
    <property type="match status" value="1"/>
</dbReference>
<dbReference type="PANTHER" id="PTHR11153">
    <property type="entry name" value="SIDEROFLEXIN"/>
    <property type="match status" value="1"/>
</dbReference>
<dbReference type="PANTHER" id="PTHR11153:SF6">
    <property type="entry name" value="SIDEROFLEXIN-5"/>
    <property type="match status" value="1"/>
</dbReference>
<dbReference type="Pfam" id="PF03820">
    <property type="entry name" value="SFXNs"/>
    <property type="match status" value="1"/>
</dbReference>
<accession>Q54NQ9</accession>
<reference key="1">
    <citation type="journal article" date="2005" name="Nature">
        <title>The genome of the social amoeba Dictyostelium discoideum.</title>
        <authorList>
            <person name="Eichinger L."/>
            <person name="Pachebat J.A."/>
            <person name="Gloeckner G."/>
            <person name="Rajandream M.A."/>
            <person name="Sucgang R."/>
            <person name="Berriman M."/>
            <person name="Song J."/>
            <person name="Olsen R."/>
            <person name="Szafranski K."/>
            <person name="Xu Q."/>
            <person name="Tunggal B."/>
            <person name="Kummerfeld S."/>
            <person name="Madera M."/>
            <person name="Konfortov B.A."/>
            <person name="Rivero F."/>
            <person name="Bankier A.T."/>
            <person name="Lehmann R."/>
            <person name="Hamlin N."/>
            <person name="Davies R."/>
            <person name="Gaudet P."/>
            <person name="Fey P."/>
            <person name="Pilcher K."/>
            <person name="Chen G."/>
            <person name="Saunders D."/>
            <person name="Sodergren E.J."/>
            <person name="Davis P."/>
            <person name="Kerhornou A."/>
            <person name="Nie X."/>
            <person name="Hall N."/>
            <person name="Anjard C."/>
            <person name="Hemphill L."/>
            <person name="Bason N."/>
            <person name="Farbrother P."/>
            <person name="Desany B."/>
            <person name="Just E."/>
            <person name="Morio T."/>
            <person name="Rost R."/>
            <person name="Churcher C.M."/>
            <person name="Cooper J."/>
            <person name="Haydock S."/>
            <person name="van Driessche N."/>
            <person name="Cronin A."/>
            <person name="Goodhead I."/>
            <person name="Muzny D.M."/>
            <person name="Mourier T."/>
            <person name="Pain A."/>
            <person name="Lu M."/>
            <person name="Harper D."/>
            <person name="Lindsay R."/>
            <person name="Hauser H."/>
            <person name="James K.D."/>
            <person name="Quiles M."/>
            <person name="Madan Babu M."/>
            <person name="Saito T."/>
            <person name="Buchrieser C."/>
            <person name="Wardroper A."/>
            <person name="Felder M."/>
            <person name="Thangavelu M."/>
            <person name="Johnson D."/>
            <person name="Knights A."/>
            <person name="Loulseged H."/>
            <person name="Mungall K.L."/>
            <person name="Oliver K."/>
            <person name="Price C."/>
            <person name="Quail M.A."/>
            <person name="Urushihara H."/>
            <person name="Hernandez J."/>
            <person name="Rabbinowitsch E."/>
            <person name="Steffen D."/>
            <person name="Sanders M."/>
            <person name="Ma J."/>
            <person name="Kohara Y."/>
            <person name="Sharp S."/>
            <person name="Simmonds M.N."/>
            <person name="Spiegler S."/>
            <person name="Tivey A."/>
            <person name="Sugano S."/>
            <person name="White B."/>
            <person name="Walker D."/>
            <person name="Woodward J.R."/>
            <person name="Winckler T."/>
            <person name="Tanaka Y."/>
            <person name="Shaulsky G."/>
            <person name="Schleicher M."/>
            <person name="Weinstock G.M."/>
            <person name="Rosenthal A."/>
            <person name="Cox E.C."/>
            <person name="Chisholm R.L."/>
            <person name="Gibbs R.A."/>
            <person name="Loomis W.F."/>
            <person name="Platzer M."/>
            <person name="Kay R.R."/>
            <person name="Williams J.G."/>
            <person name="Dear P.H."/>
            <person name="Noegel A.A."/>
            <person name="Barrell B.G."/>
            <person name="Kuspa A."/>
        </authorList>
    </citation>
    <scope>NUCLEOTIDE SEQUENCE [LARGE SCALE GENOMIC DNA]</scope>
    <source>
        <strain>AX4</strain>
    </source>
</reference>
<name>SFXN_DICDI</name>